<proteinExistence type="evidence at transcript level"/>
<keyword id="KW-0458">Lysosome</keyword>
<keyword id="KW-0472">Membrane</keyword>
<keyword id="KW-0479">Metal-binding</keyword>
<keyword id="KW-0597">Phosphoprotein</keyword>
<keyword id="KW-1185">Reference proteome</keyword>
<keyword id="KW-0677">Repeat</keyword>
<keyword id="KW-0853">WD repeat</keyword>
<keyword id="KW-0862">Zinc</keyword>
<keyword id="KW-0863">Zinc-finger</keyword>
<feature type="chain" id="PRO_0000329406" description="GATOR2 complex protein MIOS">
    <location>
        <begin position="1"/>
        <end position="875"/>
    </location>
</feature>
<feature type="repeat" description="WD 1">
    <location>
        <begin position="61"/>
        <end position="100"/>
    </location>
</feature>
<feature type="repeat" description="WD 2">
    <location>
        <begin position="111"/>
        <end position="155"/>
    </location>
</feature>
<feature type="repeat" description="WD 3">
    <location>
        <begin position="182"/>
        <end position="221"/>
    </location>
</feature>
<feature type="repeat" description="WD 4">
    <location>
        <begin position="223"/>
        <end position="261"/>
    </location>
</feature>
<feature type="repeat" description="WD 5">
    <location>
        <begin position="265"/>
        <end position="306"/>
    </location>
</feature>
<feature type="repeat" description="WD 6">
    <location>
        <begin position="395"/>
        <end position="437"/>
    </location>
</feature>
<feature type="zinc finger region" description="C4-type" evidence="2">
    <location>
        <begin position="735"/>
        <end position="781"/>
    </location>
</feature>
<feature type="zinc finger region" description="RING-type; atypical" evidence="2">
    <location>
        <begin position="782"/>
        <end position="863"/>
    </location>
</feature>
<feature type="binding site" evidence="2">
    <location>
        <position position="737"/>
    </location>
    <ligand>
        <name>Zn(2+)</name>
        <dbReference type="ChEBI" id="CHEBI:29105"/>
        <label>1</label>
    </ligand>
</feature>
<feature type="binding site" evidence="2">
    <location>
        <position position="740"/>
    </location>
    <ligand>
        <name>Zn(2+)</name>
        <dbReference type="ChEBI" id="CHEBI:29105"/>
        <label>1</label>
    </ligand>
</feature>
<feature type="binding site" evidence="2">
    <location>
        <position position="775"/>
    </location>
    <ligand>
        <name>Zn(2+)</name>
        <dbReference type="ChEBI" id="CHEBI:29105"/>
        <label>1</label>
    </ligand>
</feature>
<feature type="binding site" evidence="2">
    <location>
        <position position="778"/>
    </location>
    <ligand>
        <name>Zn(2+)</name>
        <dbReference type="ChEBI" id="CHEBI:29105"/>
        <label>1</label>
    </ligand>
</feature>
<feature type="binding site" evidence="2">
    <location>
        <position position="788"/>
    </location>
    <ligand>
        <name>Zn(2+)</name>
        <dbReference type="ChEBI" id="CHEBI:29105"/>
        <label>2</label>
    </ligand>
</feature>
<feature type="binding site" evidence="2">
    <location>
        <position position="827"/>
    </location>
    <ligand>
        <name>Zn(2+)</name>
        <dbReference type="ChEBI" id="CHEBI:29105"/>
        <label>3</label>
    </ligand>
</feature>
<feature type="binding site" evidence="2">
    <location>
        <position position="830"/>
    </location>
    <ligand>
        <name>Zn(2+)</name>
        <dbReference type="ChEBI" id="CHEBI:29105"/>
        <label>3</label>
    </ligand>
</feature>
<feature type="binding site" evidence="2">
    <location>
        <position position="830"/>
    </location>
    <ligand>
        <name>Zn(2+)</name>
        <dbReference type="ChEBI" id="CHEBI:29105"/>
        <label>4</label>
    </ligand>
</feature>
<feature type="binding site" evidence="2">
    <location>
        <position position="832"/>
    </location>
    <ligand>
        <name>Zn(2+)</name>
        <dbReference type="ChEBI" id="CHEBI:29105"/>
        <label>4</label>
    </ligand>
</feature>
<feature type="binding site" evidence="2">
    <location>
        <position position="835"/>
    </location>
    <ligand>
        <name>Zn(2+)</name>
        <dbReference type="ChEBI" id="CHEBI:29105"/>
        <label>2</label>
    </ligand>
</feature>
<feature type="binding site" evidence="2">
    <location>
        <position position="838"/>
    </location>
    <ligand>
        <name>Zn(2+)</name>
        <dbReference type="ChEBI" id="CHEBI:29105"/>
        <label>2</label>
    </ligand>
</feature>
<feature type="binding site" evidence="2">
    <location>
        <position position="849"/>
    </location>
    <ligand>
        <name>Zn(2+)</name>
        <dbReference type="ChEBI" id="CHEBI:29105"/>
        <label>4</label>
    </ligand>
</feature>
<feature type="binding site" evidence="2">
    <location>
        <position position="854"/>
    </location>
    <ligand>
        <name>Zn(2+)</name>
        <dbReference type="ChEBI" id="CHEBI:29105"/>
        <label>4</label>
    </ligand>
</feature>
<feature type="binding site" evidence="2">
    <location>
        <position position="858"/>
    </location>
    <ligand>
        <name>Zn(2+)</name>
        <dbReference type="ChEBI" id="CHEBI:29105"/>
        <label>3</label>
    </ligand>
</feature>
<feature type="modified residue" description="Phosphoserine" evidence="2">
    <location>
        <position position="759"/>
    </location>
</feature>
<feature type="modified residue" description="Phosphoserine" evidence="2">
    <location>
        <position position="766"/>
    </location>
</feature>
<organism>
    <name type="scientific">Pongo abelii</name>
    <name type="common">Sumatran orangutan</name>
    <name type="synonym">Pongo pygmaeus abelii</name>
    <dbReference type="NCBI Taxonomy" id="9601"/>
    <lineage>
        <taxon>Eukaryota</taxon>
        <taxon>Metazoa</taxon>
        <taxon>Chordata</taxon>
        <taxon>Craniata</taxon>
        <taxon>Vertebrata</taxon>
        <taxon>Euteleostomi</taxon>
        <taxon>Mammalia</taxon>
        <taxon>Eutheria</taxon>
        <taxon>Euarchontoglires</taxon>
        <taxon>Primates</taxon>
        <taxon>Haplorrhini</taxon>
        <taxon>Catarrhini</taxon>
        <taxon>Hominidae</taxon>
        <taxon>Pongo</taxon>
    </lineage>
</organism>
<reference key="1">
    <citation type="submission" date="2004-11" db="EMBL/GenBank/DDBJ databases">
        <authorList>
            <consortium name="The German cDNA consortium"/>
        </authorList>
    </citation>
    <scope>NUCLEOTIDE SEQUENCE [LARGE SCALE MRNA]</scope>
    <source>
        <tissue>Brain cortex</tissue>
    </source>
</reference>
<comment type="function">
    <text evidence="1 2">As a component of the GATOR2 complex, functions as an activator of the amino acid-sensing branch of the mTORC1 signaling pathway (By similarity). The GATOR2 complex indirectly activates mTORC1 through the inhibition of the GATOR1 subcomplex (By similarity). GATOR2 probably acts as an E3 ubiquitin-protein ligase toward GATOR1 (By similarity). In the presence of abundant amino acids, the GATOR2 complex mediates ubiquitination of the NPRL2 core component of the GATOR1 complex, leading to GATOR1 inactivation (By similarity). In the absence of amino acids, GATOR2 is inhibited, activating the GATOR1 complex (By similarity). Within the GATOR2 complex, MIOS is required to prevent autoubiquitination of WDR24, the catalytic subunit of the complex (By similarity). The GATOR2 complex is required for brain myelination (By similarity).</text>
</comment>
<comment type="activity regulation">
    <text evidence="2">The GATOR2 complex is negatively regulated by the upstream amino acid sensors CASTOR1 and SESN2, which sequester the GATOR2 complex in absence of amino acids. In the presence of abundant amino acids, GATOR2 is released from CASTOR1 and SESN2 and activated.</text>
</comment>
<comment type="subunit">
    <text evidence="2">Component of the GATOR2 subcomplex, composed of MIOS, SEC13, SEH1L, WDR24 and WDR59. The GATOR2 complex interacts with CASTOR1 and CASTOR2; the interaction is negatively regulated by arginine. CASTOR1 and CASTOR2 convey leucine availability via direct interaction with MIOS. The GATOR2 complex interacts with SESN1, SESN2 and SESN3; the interaction is negatively regulated by amino acids. Interacts with SAR1A and SAR1B; the interaction is direct, disrupted by leucine and mediates the interaction of SAR1A or SAR1B with the GATOR2 complex to negatively regulate the TORC1 signaling upon leucine deprivation (By similarity).</text>
</comment>
<comment type="subcellular location">
    <subcellularLocation>
        <location evidence="2">Lysosome membrane</location>
    </subcellularLocation>
</comment>
<comment type="similarity">
    <text evidence="3">Belongs to the WD repeat mio family.</text>
</comment>
<name>MIOS_PONAB</name>
<sequence>MSGTKPDILWAPHQVDRFVVCDSELSLYHVESTVNSELKAGSLRLSEDSAATLLSINSDTPYMKCVACYLNYDPECLLAVGQANGRVVLTSLGQDHNSKFKDLIGKEFVPKHARQCNTLAWNPLDNNWLAAGLDKHRADFSVLIWDICSKYTPDIVPMEKVKLSAGETETTLLVTKPLYELGQNDACLSLCWLPRDQKLLLAGMHRNLAIFDLRNTSQKMFVNTKAVQGVTVDPYFHDRVASFYEGQVAIWDLRKFEKPVLTLTEQPKPLTKVAWCPTRTGLLATLTRDSNIIRLYDMQHTPTPIGDETEPTIIERSVQPCDNYIASFAWHPTSQNRMIVVTPNRTMSDFTVFERISLAWSPITSLMWACGRHLYECTEEENDNSLEKDIATKMRLRALSRYGLDTEQVWRNHILAGNEDPQLKSLWYTLHFMKQYTEDMDQKSPGNKGSLVYAGIKSIVKSSLGMVESSRHNWSGLDKQSDIQNLNEERILALQLCGWIKKGTDVDVGPFLNSLVQEGERERAAAVALFNLDIRRAIQILNEGASSEKGDLNLNVVAMALSGYTGEKNSLWREMCSTLRLQLNNPYLCVMFAFLTSETGSYDGVLYENKVAVRDRVAFACKFLSDTQLNRYIEKLTNEMKEAGNLEGILLTGLTKDGVDLMESYVDRTGDVQTASYCMLQGSPLDVLKDERVQYWIENYRNLLDAWRFWHKRAEFDIHRSKLDPSSKPLAQVFVSCNFCGKSISYSCSAVPHQGRGFSQYGVSGSPTKSKVTSCPGCRKPLPRCALCLINTGTPVSSCPGGTKSDEKVDLSKDKKLAQFNNWFTWCHNCRHGGHAGHMLSWFRDHAECPVSACTCKCMQLDTTGNLVPAETVQP</sequence>
<protein>
    <recommendedName>
        <fullName evidence="3">GATOR2 complex protein MIOS</fullName>
    </recommendedName>
</protein>
<gene>
    <name evidence="2" type="primary">MIOS</name>
</gene>
<accession>Q5RCA2</accession>
<evidence type="ECO:0000250" key="1">
    <source>
        <dbReference type="UniProtKB" id="Q8VE19"/>
    </source>
</evidence>
<evidence type="ECO:0000250" key="2">
    <source>
        <dbReference type="UniProtKB" id="Q9NXC5"/>
    </source>
</evidence>
<evidence type="ECO:0000305" key="3"/>
<dbReference type="EMBL" id="CR858376">
    <property type="protein sequence ID" value="CAH90605.1"/>
    <property type="molecule type" value="mRNA"/>
</dbReference>
<dbReference type="RefSeq" id="NP_001128962.1">
    <property type="nucleotide sequence ID" value="NM_001135490.1"/>
</dbReference>
<dbReference type="SMR" id="Q5RCA2"/>
<dbReference type="STRING" id="9601.ENSPPYP00000019940"/>
<dbReference type="GeneID" id="100190802"/>
<dbReference type="KEGG" id="pon:100190802"/>
<dbReference type="CTD" id="54468"/>
<dbReference type="eggNOG" id="KOG1008">
    <property type="taxonomic scope" value="Eukaryota"/>
</dbReference>
<dbReference type="InParanoid" id="Q5RCA2"/>
<dbReference type="OrthoDB" id="341486at2759"/>
<dbReference type="Proteomes" id="UP000001595">
    <property type="component" value="Unplaced"/>
</dbReference>
<dbReference type="GO" id="GO:0061700">
    <property type="term" value="C:GATOR2 complex"/>
    <property type="evidence" value="ECO:0000250"/>
    <property type="project" value="UniProtKB"/>
</dbReference>
<dbReference type="GO" id="GO:0005765">
    <property type="term" value="C:lysosomal membrane"/>
    <property type="evidence" value="ECO:0000250"/>
    <property type="project" value="UniProtKB"/>
</dbReference>
<dbReference type="GO" id="GO:0008270">
    <property type="term" value="F:zinc ion binding"/>
    <property type="evidence" value="ECO:0007669"/>
    <property type="project" value="UniProtKB-KW"/>
</dbReference>
<dbReference type="GO" id="GO:0034198">
    <property type="term" value="P:cellular response to amino acid starvation"/>
    <property type="evidence" value="ECO:0007669"/>
    <property type="project" value="TreeGrafter"/>
</dbReference>
<dbReference type="GO" id="GO:0031669">
    <property type="term" value="P:cellular response to nutrient levels"/>
    <property type="evidence" value="ECO:0000250"/>
    <property type="project" value="UniProtKB"/>
</dbReference>
<dbReference type="GO" id="GO:0048709">
    <property type="term" value="P:oligodendrocyte differentiation"/>
    <property type="evidence" value="ECO:0000250"/>
    <property type="project" value="UniProtKB"/>
</dbReference>
<dbReference type="GO" id="GO:0070444">
    <property type="term" value="P:oligodendrocyte progenitor proliferation"/>
    <property type="evidence" value="ECO:0000250"/>
    <property type="project" value="UniProtKB"/>
</dbReference>
<dbReference type="GO" id="GO:1904263">
    <property type="term" value="P:positive regulation of TORC1 signaling"/>
    <property type="evidence" value="ECO:0000250"/>
    <property type="project" value="UniProtKB"/>
</dbReference>
<dbReference type="CDD" id="cd16691">
    <property type="entry name" value="mRING-H2-C3H3C2_Mio"/>
    <property type="match status" value="1"/>
</dbReference>
<dbReference type="FunFam" id="2.130.10.10:FF:000103">
    <property type="entry name" value="Meiosis regulator for oocyte development"/>
    <property type="match status" value="1"/>
</dbReference>
<dbReference type="Gene3D" id="2.130.10.10">
    <property type="entry name" value="YVTN repeat-like/Quinoprotein amine dehydrogenase"/>
    <property type="match status" value="1"/>
</dbReference>
<dbReference type="InterPro" id="IPR037593">
    <property type="entry name" value="MIOS/Sea4"/>
</dbReference>
<dbReference type="InterPro" id="IPR049092">
    <property type="entry name" value="MIOS_a-sol"/>
</dbReference>
<dbReference type="InterPro" id="IPR015943">
    <property type="entry name" value="WD40/YVTN_repeat-like_dom_sf"/>
</dbReference>
<dbReference type="InterPro" id="IPR036322">
    <property type="entry name" value="WD40_repeat_dom_sf"/>
</dbReference>
<dbReference type="InterPro" id="IPR001680">
    <property type="entry name" value="WD40_rpt"/>
</dbReference>
<dbReference type="InterPro" id="IPR031488">
    <property type="entry name" value="Zn_ribbon_mio"/>
</dbReference>
<dbReference type="PANTHER" id="PTHR16453:SF9">
    <property type="entry name" value="GATOR COMPLEX PROTEIN MIOS"/>
    <property type="match status" value="1"/>
</dbReference>
<dbReference type="PANTHER" id="PTHR16453">
    <property type="entry name" value="WD40 DOMAIN-CONTAINING PROTEIN MIO FAMILY MEMBER"/>
    <property type="match status" value="1"/>
</dbReference>
<dbReference type="Pfam" id="PF21719">
    <property type="entry name" value="MIOS_a-sol"/>
    <property type="match status" value="1"/>
</dbReference>
<dbReference type="Pfam" id="PF21720">
    <property type="entry name" value="MIOS_WD40"/>
    <property type="match status" value="1"/>
</dbReference>
<dbReference type="Pfam" id="PF17034">
    <property type="entry name" value="zinc_ribbon_16"/>
    <property type="match status" value="1"/>
</dbReference>
<dbReference type="SMART" id="SM00320">
    <property type="entry name" value="WD40"/>
    <property type="match status" value="4"/>
</dbReference>
<dbReference type="SUPFAM" id="SSF50978">
    <property type="entry name" value="WD40 repeat-like"/>
    <property type="match status" value="1"/>
</dbReference>